<reference key="1">
    <citation type="journal article" date="1999" name="FEBS Lett.">
        <title>A novel K+ channel blocking toxin from Tityus discrepans scorpion venom.</title>
        <authorList>
            <person name="D'Suze G."/>
            <person name="Zamudio F."/>
            <person name="Gomez-Lagunas F."/>
            <person name="Possani L.D."/>
        </authorList>
    </citation>
    <scope>PROTEIN SEQUENCE</scope>
    <scope>MASS SPECTROMETRY</scope>
    <source>
        <tissue>Venom</tissue>
    </source>
</reference>
<reference key="2">
    <citation type="journal article" date="2006" name="Proteomics">
        <title>Proteomic analysis of Tityus discrepans scorpion venom and amino acid sequence of novel toxins.</title>
        <authorList>
            <person name="Batista C.V.F."/>
            <person name="D'Suze G."/>
            <person name="Gomez-Lagunas F."/>
            <person name="Zamudio F.Z."/>
            <person name="Encarnacion S."/>
            <person name="Sevcik C."/>
            <person name="Possani L.D."/>
        </authorList>
    </citation>
    <scope>PROTEIN SEQUENCE OF 1-10</scope>
    <scope>MASS SPECTROMETRY</scope>
</reference>
<sequence>VFINVKCTGSKQCLPACKAAVGKAAGKCMNGKCKCYT</sequence>
<accession>P59925</accession>
<keyword id="KW-0903">Direct protein sequencing</keyword>
<keyword id="KW-1015">Disulfide bond</keyword>
<keyword id="KW-0872">Ion channel impairing toxin</keyword>
<keyword id="KW-0528">Neurotoxin</keyword>
<keyword id="KW-0632">Potassium channel impairing toxin</keyword>
<keyword id="KW-0964">Secreted</keyword>
<keyword id="KW-0800">Toxin</keyword>
<name>KAX43_TITDI</name>
<dbReference type="SMR" id="P59925"/>
<dbReference type="GO" id="GO:0005576">
    <property type="term" value="C:extracellular region"/>
    <property type="evidence" value="ECO:0007669"/>
    <property type="project" value="UniProtKB-SubCell"/>
</dbReference>
<dbReference type="GO" id="GO:0008200">
    <property type="term" value="F:ion channel inhibitor activity"/>
    <property type="evidence" value="ECO:0007669"/>
    <property type="project" value="InterPro"/>
</dbReference>
<dbReference type="GO" id="GO:0015459">
    <property type="term" value="F:potassium channel regulator activity"/>
    <property type="evidence" value="ECO:0007669"/>
    <property type="project" value="UniProtKB-KW"/>
</dbReference>
<dbReference type="GO" id="GO:0090729">
    <property type="term" value="F:toxin activity"/>
    <property type="evidence" value="ECO:0007669"/>
    <property type="project" value="UniProtKB-KW"/>
</dbReference>
<dbReference type="FunFam" id="3.30.30.10:FF:000009">
    <property type="entry name" value="Potassium channel toxin alpha-KTx 4.3"/>
    <property type="match status" value="1"/>
</dbReference>
<dbReference type="Gene3D" id="3.30.30.10">
    <property type="entry name" value="Knottin, scorpion toxin-like"/>
    <property type="match status" value="1"/>
</dbReference>
<dbReference type="InterPro" id="IPR036574">
    <property type="entry name" value="Scorpion_toxin-like_sf"/>
</dbReference>
<dbReference type="InterPro" id="IPR001947">
    <property type="entry name" value="Scorpion_toxinS_K_inh"/>
</dbReference>
<dbReference type="Pfam" id="PF00451">
    <property type="entry name" value="Toxin_2"/>
    <property type="match status" value="1"/>
</dbReference>
<dbReference type="PRINTS" id="PR00286">
    <property type="entry name" value="CHARYBDTOXIN"/>
</dbReference>
<dbReference type="SUPFAM" id="SSF57095">
    <property type="entry name" value="Scorpion toxin-like"/>
    <property type="match status" value="1"/>
</dbReference>
<dbReference type="PROSITE" id="PS01138">
    <property type="entry name" value="SCORP_SHORT_TOXIN"/>
    <property type="match status" value="1"/>
</dbReference>
<protein>
    <recommendedName>
        <fullName>Potassium channel toxin alpha-KTx 4.3</fullName>
    </recommendedName>
    <alternativeName>
        <fullName>Toxin TdK1</fullName>
    </alternativeName>
</protein>
<evidence type="ECO:0000250" key="1"/>
<evidence type="ECO:0000255" key="2"/>
<evidence type="ECO:0000269" key="3">
    <source>
    </source>
</evidence>
<evidence type="ECO:0000269" key="4">
    <source>
    </source>
</evidence>
<evidence type="ECO:0000305" key="5"/>
<feature type="peptide" id="PRO_0000044922" description="Potassium channel toxin alpha-KTx 4.3">
    <location>
        <begin position="1"/>
        <end position="37"/>
    </location>
</feature>
<feature type="region of interest" description="Interaction with Ca(2+)-activated K(+) channels" evidence="2">
    <location>
        <begin position="26"/>
        <end position="33"/>
    </location>
</feature>
<feature type="site" description="Basic residue of the functional dyad" evidence="1">
    <location>
        <position position="27"/>
    </location>
</feature>
<feature type="site" description="Aromatic residue of the functional dyad" evidence="1">
    <location>
        <position position="36"/>
    </location>
</feature>
<feature type="disulfide bond" evidence="1">
    <location>
        <begin position="7"/>
        <end position="28"/>
    </location>
</feature>
<feature type="disulfide bond" evidence="1">
    <location>
        <begin position="13"/>
        <end position="33"/>
    </location>
</feature>
<feature type="disulfide bond" evidence="1">
    <location>
        <begin position="17"/>
        <end position="35"/>
    </location>
</feature>
<proteinExistence type="evidence at protein level"/>
<organism>
    <name type="scientific">Tityus discrepans</name>
    <name type="common">Venezuelan scorpion</name>
    <dbReference type="NCBI Taxonomy" id="57059"/>
    <lineage>
        <taxon>Eukaryota</taxon>
        <taxon>Metazoa</taxon>
        <taxon>Ecdysozoa</taxon>
        <taxon>Arthropoda</taxon>
        <taxon>Chelicerata</taxon>
        <taxon>Arachnida</taxon>
        <taxon>Scorpiones</taxon>
        <taxon>Buthida</taxon>
        <taxon>Buthoidea</taxon>
        <taxon>Buthidae</taxon>
        <taxon>Tityus</taxon>
    </lineage>
</organism>
<comment type="function">
    <text>Blocks reversibly Shaker B potassium-channels.</text>
</comment>
<comment type="subcellular location">
    <subcellularLocation>
        <location>Secreted</location>
    </subcellularLocation>
</comment>
<comment type="tissue specificity">
    <text>Expressed by the venom gland.</text>
</comment>
<comment type="domain">
    <text evidence="5">Has the structural arrangement of an alpha-helix connected to antiparallel beta-sheets by disulfide bonds (CS-alpha/beta).</text>
</comment>
<comment type="mass spectrometry"/>
<comment type="mass spectrometry"/>
<comment type="similarity">
    <text evidence="5">Belongs to the short scorpion toxin superfamily. Potassium channel inhibitor family. Alpha-KTx 04 subfamily.</text>
</comment>